<dbReference type="EMBL" id="CU928174">
    <property type="protein sequence ID" value="CAR26668.1"/>
    <property type="molecule type" value="Genomic_DNA"/>
</dbReference>
<dbReference type="RefSeq" id="XP_002495601.1">
    <property type="nucleotide sequence ID" value="XM_002495556.1"/>
</dbReference>
<dbReference type="FunCoup" id="C5DSA7">
    <property type="interactions" value="25"/>
</dbReference>
<dbReference type="STRING" id="559307.C5DSA7"/>
<dbReference type="GlyCosmos" id="C5DSA7">
    <property type="glycosylation" value="14 sites, No reported glycans"/>
</dbReference>
<dbReference type="GeneID" id="8202770"/>
<dbReference type="KEGG" id="zro:ZYRO0B15224g"/>
<dbReference type="HOGENOM" id="CLU_033723_0_0_1"/>
<dbReference type="InParanoid" id="C5DSA7"/>
<dbReference type="Proteomes" id="UP000008536">
    <property type="component" value="Chromosome B"/>
</dbReference>
<dbReference type="GO" id="GO:0016020">
    <property type="term" value="C:membrane"/>
    <property type="evidence" value="ECO:0007669"/>
    <property type="project" value="UniProtKB-SubCell"/>
</dbReference>
<dbReference type="InterPro" id="IPR051008">
    <property type="entry name" value="Telomere_Capping_Maintenance"/>
</dbReference>
<dbReference type="PANTHER" id="PTHR35518:SF2">
    <property type="entry name" value="MAINTENANCE OF TELOMERE CAPPING PROTEIN 6"/>
    <property type="match status" value="1"/>
</dbReference>
<dbReference type="PANTHER" id="PTHR35518">
    <property type="entry name" value="MAINTENANCE OF TELOMOERE CAPPING"/>
    <property type="match status" value="1"/>
</dbReference>
<dbReference type="Pfam" id="PF25506">
    <property type="entry name" value="TIM-barrel_MTC6"/>
    <property type="match status" value="1"/>
</dbReference>
<name>MTC6_ZYGRC</name>
<reference key="1">
    <citation type="journal article" date="2009" name="Genome Res.">
        <title>Comparative genomics of protoploid Saccharomycetaceae.</title>
        <authorList>
            <consortium name="The Genolevures Consortium"/>
            <person name="Souciet J.-L."/>
            <person name="Dujon B."/>
            <person name="Gaillardin C."/>
            <person name="Johnston M."/>
            <person name="Baret P.V."/>
            <person name="Cliften P."/>
            <person name="Sherman D.J."/>
            <person name="Weissenbach J."/>
            <person name="Westhof E."/>
            <person name="Wincker P."/>
            <person name="Jubin C."/>
            <person name="Poulain J."/>
            <person name="Barbe V."/>
            <person name="Segurens B."/>
            <person name="Artiguenave F."/>
            <person name="Anthouard V."/>
            <person name="Vacherie B."/>
            <person name="Val M.-E."/>
            <person name="Fulton R.S."/>
            <person name="Minx P."/>
            <person name="Wilson R."/>
            <person name="Durrens P."/>
            <person name="Jean G."/>
            <person name="Marck C."/>
            <person name="Martin T."/>
            <person name="Nikolski M."/>
            <person name="Rolland T."/>
            <person name="Seret M.-L."/>
            <person name="Casaregola S."/>
            <person name="Despons L."/>
            <person name="Fairhead C."/>
            <person name="Fischer G."/>
            <person name="Lafontaine I."/>
            <person name="Leh V."/>
            <person name="Lemaire M."/>
            <person name="de Montigny J."/>
            <person name="Neuveglise C."/>
            <person name="Thierry A."/>
            <person name="Blanc-Lenfle I."/>
            <person name="Bleykasten C."/>
            <person name="Diffels J."/>
            <person name="Fritsch E."/>
            <person name="Frangeul L."/>
            <person name="Goeffon A."/>
            <person name="Jauniaux N."/>
            <person name="Kachouri-Lafond R."/>
            <person name="Payen C."/>
            <person name="Potier S."/>
            <person name="Pribylova L."/>
            <person name="Ozanne C."/>
            <person name="Richard G.-F."/>
            <person name="Sacerdot C."/>
            <person name="Straub M.-L."/>
            <person name="Talla E."/>
        </authorList>
    </citation>
    <scope>NUCLEOTIDE SEQUENCE [LARGE SCALE GENOMIC DNA]</scope>
    <source>
        <strain>ATCC 2623 / CBS 732 / BCRC 21506 / NBRC 1130 / NCYC 568 / NRRL Y-229</strain>
    </source>
</reference>
<protein>
    <recommendedName>
        <fullName>Maintenance of telomere capping protein 6</fullName>
    </recommendedName>
</protein>
<keyword id="KW-0325">Glycoprotein</keyword>
<keyword id="KW-0472">Membrane</keyword>
<keyword id="KW-1185">Reference proteome</keyword>
<keyword id="KW-0732">Signal</keyword>
<keyword id="KW-0812">Transmembrane</keyword>
<keyword id="KW-1133">Transmembrane helix</keyword>
<accession>C5DSA7</accession>
<sequence length="513" mass="58641">MNGLLLILLVYITVWRPRPCQCIQERDIQRDVEDLPSVSYQVQYGIRSQRDLMANVPIDQVPMIGVNIFDAFLKNGRNNDSRALLSFMELMQHGVQSFTVDLEPRNSQWMLKKSNISFTRFLNVFQTYVNGSDNNLSANMLVLLLKISPGNESNSTGTGKNGSNLTRILDQSFGRQRIYTPDDLDYDREYGRTFSTFGANSVGWPILGSFLYDKKRRVILMEVTNHLVYQNTPYIFNGSSILHLDEGNATLGIPTTVDQIQNLSSISWKFLEASFTTTDIKQYVDIGYNPVITNEYSVGDFGDIYQLLNLTILWSWKPDQPKTIQSSDSAREHQLIAYNCAALHYTSANFSASWDVENCYAIHKGLCKHRFNDYIWVISKGHDNYFGFDSHSESKCPEDYYFSLPKTPLEQLAITQYLRNTSSEDALFWIDMNSVSVNDCWVTGGPDATCPYQRSVSKRNFVAMLTPVTVCSFVILCVVFYLNVLHVPIHNNRKSWRRIITEVSKWEVDGVPS</sequence>
<evidence type="ECO:0000250" key="1"/>
<evidence type="ECO:0000255" key="2"/>
<evidence type="ECO:0000305" key="3"/>
<comment type="function">
    <text evidence="1">May be involved in telomere capping.</text>
</comment>
<comment type="subcellular location">
    <subcellularLocation>
        <location evidence="3">Membrane</location>
        <topology evidence="3">Single-pass type I membrane protein</topology>
    </subcellularLocation>
</comment>
<comment type="similarity">
    <text evidence="3">Belongs to the MTC6 family.</text>
</comment>
<organism>
    <name type="scientific">Zygosaccharomyces rouxii (strain ATCC 2623 / CBS 732 / NBRC 1130 / NCYC 568 / NRRL Y-229)</name>
    <dbReference type="NCBI Taxonomy" id="559307"/>
    <lineage>
        <taxon>Eukaryota</taxon>
        <taxon>Fungi</taxon>
        <taxon>Dikarya</taxon>
        <taxon>Ascomycota</taxon>
        <taxon>Saccharomycotina</taxon>
        <taxon>Saccharomycetes</taxon>
        <taxon>Saccharomycetales</taxon>
        <taxon>Saccharomycetaceae</taxon>
        <taxon>Zygosaccharomyces</taxon>
    </lineage>
</organism>
<feature type="signal peptide" evidence="2">
    <location>
        <begin position="1"/>
        <end position="22"/>
    </location>
</feature>
<feature type="chain" id="PRO_0000407790" description="Maintenance of telomere capping protein 6">
    <location>
        <begin position="23"/>
        <end position="513"/>
    </location>
</feature>
<feature type="topological domain" description="Extracellular" evidence="2">
    <location>
        <begin position="23"/>
        <end position="460"/>
    </location>
</feature>
<feature type="transmembrane region" description="Helical" evidence="2">
    <location>
        <begin position="461"/>
        <end position="481"/>
    </location>
</feature>
<feature type="topological domain" description="Cytoplasmic" evidence="2">
    <location>
        <begin position="482"/>
        <end position="513"/>
    </location>
</feature>
<feature type="glycosylation site" description="N-linked (GlcNAc...) asparagine" evidence="2">
    <location>
        <position position="79"/>
    </location>
</feature>
<feature type="glycosylation site" description="N-linked (GlcNAc...) asparagine" evidence="2">
    <location>
        <position position="115"/>
    </location>
</feature>
<feature type="glycosylation site" description="N-linked (GlcNAc...) asparagine" evidence="2">
    <location>
        <position position="130"/>
    </location>
</feature>
<feature type="glycosylation site" description="N-linked (GlcNAc...) asparagine" evidence="2">
    <location>
        <position position="135"/>
    </location>
</feature>
<feature type="glycosylation site" description="N-linked (GlcNAc...) asparagine" evidence="2">
    <location>
        <position position="151"/>
    </location>
</feature>
<feature type="glycosylation site" description="N-linked (GlcNAc...) asparagine" evidence="2">
    <location>
        <position position="154"/>
    </location>
</feature>
<feature type="glycosylation site" description="N-linked (GlcNAc...) asparagine" evidence="2">
    <location>
        <position position="161"/>
    </location>
</feature>
<feature type="glycosylation site" description="N-linked (GlcNAc...) asparagine" evidence="2">
    <location>
        <position position="164"/>
    </location>
</feature>
<feature type="glycosylation site" description="N-linked (GlcNAc...) asparagine" evidence="2">
    <location>
        <position position="237"/>
    </location>
</feature>
<feature type="glycosylation site" description="N-linked (GlcNAc...) asparagine" evidence="2">
    <location>
        <position position="248"/>
    </location>
</feature>
<feature type="glycosylation site" description="N-linked (GlcNAc...) asparagine" evidence="2">
    <location>
        <position position="262"/>
    </location>
</feature>
<feature type="glycosylation site" description="N-linked (GlcNAc...) asparagine" evidence="2">
    <location>
        <position position="309"/>
    </location>
</feature>
<feature type="glycosylation site" description="N-linked (GlcNAc...) asparagine" evidence="2">
    <location>
        <position position="349"/>
    </location>
</feature>
<feature type="glycosylation site" description="N-linked (GlcNAc...) asparagine" evidence="2">
    <location>
        <position position="420"/>
    </location>
</feature>
<gene>
    <name type="primary">MTC6</name>
    <name type="ordered locus">ZYRO0B15224g</name>
</gene>
<proteinExistence type="inferred from homology"/>